<reference key="1">
    <citation type="journal article" date="1994" name="Plant Physiol.">
        <title>Tissue-specific expression of a gene encoding a cell wall-localized lipid transfer protein from Arabidopsis.</title>
        <authorList>
            <person name="Thoma S."/>
            <person name="Hecht U."/>
            <person name="Kippers A."/>
            <person name="Botella J."/>
            <person name="de Vries S."/>
            <person name="Somerville C.R."/>
        </authorList>
    </citation>
    <scope>NUCLEOTIDE SEQUENCE [GENOMIC DNA]</scope>
    <source>
        <tissue>Shoot</tissue>
    </source>
</reference>
<reference key="2">
    <citation type="journal article" date="2000" name="Plant Sci.">
        <title>Lipid transfer proteins are encoded by a small multigene family in Arabidopsis thaliana.</title>
        <authorList>
            <person name="Arondel V.A."/>
            <person name="Vergnolle C."/>
            <person name="Cantrel C."/>
            <person name="Kader J.-C."/>
        </authorList>
    </citation>
    <scope>NUCLEOTIDE SEQUENCE [MRNA]</scope>
    <source>
        <strain>cv. Columbia</strain>
    </source>
</reference>
<reference key="3">
    <citation type="journal article" date="1999" name="Nature">
        <title>Sequence and analysis of chromosome 2 of the plant Arabidopsis thaliana.</title>
        <authorList>
            <person name="Lin X."/>
            <person name="Kaul S."/>
            <person name="Rounsley S.D."/>
            <person name="Shea T.P."/>
            <person name="Benito M.-I."/>
            <person name="Town C.D."/>
            <person name="Fujii C.Y."/>
            <person name="Mason T.M."/>
            <person name="Bowman C.L."/>
            <person name="Barnstead M.E."/>
            <person name="Feldblyum T.V."/>
            <person name="Buell C.R."/>
            <person name="Ketchum K.A."/>
            <person name="Lee J.J."/>
            <person name="Ronning C.M."/>
            <person name="Koo H.L."/>
            <person name="Moffat K.S."/>
            <person name="Cronin L.A."/>
            <person name="Shen M."/>
            <person name="Pai G."/>
            <person name="Van Aken S."/>
            <person name="Umayam L."/>
            <person name="Tallon L.J."/>
            <person name="Gill J.E."/>
            <person name="Adams M.D."/>
            <person name="Carrera A.J."/>
            <person name="Creasy T.H."/>
            <person name="Goodman H.M."/>
            <person name="Somerville C.R."/>
            <person name="Copenhaver G.P."/>
            <person name="Preuss D."/>
            <person name="Nierman W.C."/>
            <person name="White O."/>
            <person name="Eisen J.A."/>
            <person name="Salzberg S.L."/>
            <person name="Fraser C.M."/>
            <person name="Venter J.C."/>
        </authorList>
    </citation>
    <scope>NUCLEOTIDE SEQUENCE [LARGE SCALE GENOMIC DNA]</scope>
    <source>
        <strain>cv. Columbia</strain>
    </source>
</reference>
<reference key="4">
    <citation type="journal article" date="2017" name="Plant J.">
        <title>Araport11: a complete reannotation of the Arabidopsis thaliana reference genome.</title>
        <authorList>
            <person name="Cheng C.Y."/>
            <person name="Krishnakumar V."/>
            <person name="Chan A.P."/>
            <person name="Thibaud-Nissen F."/>
            <person name="Schobel S."/>
            <person name="Town C.D."/>
        </authorList>
    </citation>
    <scope>GENOME REANNOTATION</scope>
    <source>
        <strain>cv. Columbia</strain>
    </source>
</reference>
<reference key="5">
    <citation type="journal article" date="2003" name="Science">
        <title>Empirical analysis of transcriptional activity in the Arabidopsis genome.</title>
        <authorList>
            <person name="Yamada K."/>
            <person name="Lim J."/>
            <person name="Dale J.M."/>
            <person name="Chen H."/>
            <person name="Shinn P."/>
            <person name="Palm C.J."/>
            <person name="Southwick A.M."/>
            <person name="Wu H.C."/>
            <person name="Kim C.J."/>
            <person name="Nguyen M."/>
            <person name="Pham P.K."/>
            <person name="Cheuk R.F."/>
            <person name="Karlin-Newmann G."/>
            <person name="Liu S.X."/>
            <person name="Lam B."/>
            <person name="Sakano H."/>
            <person name="Wu T."/>
            <person name="Yu G."/>
            <person name="Miranda M."/>
            <person name="Quach H.L."/>
            <person name="Tripp M."/>
            <person name="Chang C.H."/>
            <person name="Lee J.M."/>
            <person name="Toriumi M.J."/>
            <person name="Chan M.M."/>
            <person name="Tang C.C."/>
            <person name="Onodera C.S."/>
            <person name="Deng J.M."/>
            <person name="Akiyama K."/>
            <person name="Ansari Y."/>
            <person name="Arakawa T."/>
            <person name="Banh J."/>
            <person name="Banno F."/>
            <person name="Bowser L."/>
            <person name="Brooks S.Y."/>
            <person name="Carninci P."/>
            <person name="Chao Q."/>
            <person name="Choy N."/>
            <person name="Enju A."/>
            <person name="Goldsmith A.D."/>
            <person name="Gurjal M."/>
            <person name="Hansen N.F."/>
            <person name="Hayashizaki Y."/>
            <person name="Johnson-Hopson C."/>
            <person name="Hsuan V.W."/>
            <person name="Iida K."/>
            <person name="Karnes M."/>
            <person name="Khan S."/>
            <person name="Koesema E."/>
            <person name="Ishida J."/>
            <person name="Jiang P.X."/>
            <person name="Jones T."/>
            <person name="Kawai J."/>
            <person name="Kamiya A."/>
            <person name="Meyers C."/>
            <person name="Nakajima M."/>
            <person name="Narusaka M."/>
            <person name="Seki M."/>
            <person name="Sakurai T."/>
            <person name="Satou M."/>
            <person name="Tamse R."/>
            <person name="Vaysberg M."/>
            <person name="Wallender E.K."/>
            <person name="Wong C."/>
            <person name="Yamamura Y."/>
            <person name="Yuan S."/>
            <person name="Shinozaki K."/>
            <person name="Davis R.W."/>
            <person name="Theologis A."/>
            <person name="Ecker J.R."/>
        </authorList>
    </citation>
    <scope>NUCLEOTIDE SEQUENCE [LARGE SCALE MRNA]</scope>
    <source>
        <strain>cv. Columbia</strain>
    </source>
</reference>
<reference key="6">
    <citation type="journal article" date="1993" name="Plant J.">
        <title>A non-specific lipid transfer protein from Arabidopsis is a cell wall protein.</title>
        <authorList>
            <person name="Thoma S."/>
            <person name="Kaneko Y."/>
            <person name="Somerville C.R."/>
        </authorList>
    </citation>
    <scope>SUBCELLULAR LOCATION</scope>
</reference>
<reference key="7">
    <citation type="journal article" date="2008" name="Plant Physiol. Biochem.">
        <title>Plant pathogenesis-related (PR) proteins: a focus on PR peptides.</title>
        <authorList>
            <person name="Sels J."/>
            <person name="Mathys J."/>
            <person name="De Coninck B.M.A."/>
            <person name="Cammue B.P.A."/>
            <person name="De Bolle M.F.C."/>
        </authorList>
    </citation>
    <scope>GENE FAMILY</scope>
    <scope>NOMENCLATURE</scope>
</reference>
<proteinExistence type="evidence at transcript level"/>
<feature type="signal peptide" evidence="1">
    <location>
        <begin position="1"/>
        <end position="25"/>
    </location>
</feature>
<feature type="chain" id="PRO_0000018361" description="Non-specific lipid-transfer protein 1">
    <location>
        <begin position="26"/>
        <end position="118"/>
    </location>
</feature>
<feature type="disulfide bond" evidence="1">
    <location>
        <begin position="29"/>
        <end position="76"/>
    </location>
</feature>
<feature type="disulfide bond" evidence="1">
    <location>
        <begin position="39"/>
        <end position="53"/>
    </location>
</feature>
<feature type="disulfide bond" evidence="1">
    <location>
        <begin position="54"/>
        <end position="100"/>
    </location>
</feature>
<feature type="disulfide bond" evidence="1">
    <location>
        <begin position="74"/>
        <end position="114"/>
    </location>
</feature>
<protein>
    <recommendedName>
        <fullName>Non-specific lipid-transfer protein 1</fullName>
        <shortName>LTP 1</shortName>
    </recommendedName>
</protein>
<evidence type="ECO:0000255" key="1"/>
<evidence type="ECO:0000269" key="2">
    <source>
    </source>
</evidence>
<evidence type="ECO:0000305" key="3"/>
<dbReference type="EMBL" id="M80567">
    <property type="protein sequence ID" value="AAA86765.1"/>
    <property type="molecule type" value="Genomic_DNA"/>
</dbReference>
<dbReference type="EMBL" id="AF159798">
    <property type="protein sequence ID" value="AAF76927.1"/>
    <property type="molecule type" value="mRNA"/>
</dbReference>
<dbReference type="EMBL" id="AC005499">
    <property type="protein sequence ID" value="AAC67364.1"/>
    <property type="molecule type" value="Genomic_DNA"/>
</dbReference>
<dbReference type="EMBL" id="CP002685">
    <property type="protein sequence ID" value="AEC09547.1"/>
    <property type="molecule type" value="Genomic_DNA"/>
</dbReference>
<dbReference type="EMBL" id="AY049296">
    <property type="protein sequence ID" value="AAK83638.1"/>
    <property type="molecule type" value="mRNA"/>
</dbReference>
<dbReference type="EMBL" id="AY091677">
    <property type="protein sequence ID" value="AAM10276.1"/>
    <property type="molecule type" value="mRNA"/>
</dbReference>
<dbReference type="PIR" id="C84806">
    <property type="entry name" value="C84806"/>
</dbReference>
<dbReference type="SMR" id="Q42589"/>
<dbReference type="BioGRID" id="3778">
    <property type="interactions" value="2"/>
</dbReference>
<dbReference type="FunCoup" id="Q42589">
    <property type="interactions" value="494"/>
</dbReference>
<dbReference type="MINT" id="Q42589"/>
<dbReference type="STRING" id="3702.Q42589"/>
<dbReference type="Allergome" id="1085">
    <property type="allergen name" value="Ara t 3"/>
</dbReference>
<dbReference type="iPTMnet" id="Q42589"/>
<dbReference type="PaxDb" id="3702-AT2G38540.1"/>
<dbReference type="ProteomicsDB" id="251139"/>
<dbReference type="EnsemblPlants" id="AT2G38540.1">
    <property type="protein sequence ID" value="AT2G38540.1"/>
    <property type="gene ID" value="AT2G38540"/>
</dbReference>
<dbReference type="GeneID" id="818436"/>
<dbReference type="Gramene" id="AT2G38540.1">
    <property type="protein sequence ID" value="AT2G38540.1"/>
    <property type="gene ID" value="AT2G38540"/>
</dbReference>
<dbReference type="KEGG" id="ath:AT2G38540"/>
<dbReference type="Araport" id="AT2G38540"/>
<dbReference type="TAIR" id="AT2G38540">
    <property type="gene designation" value="LP1"/>
</dbReference>
<dbReference type="eggNOG" id="ENOG502S4CI">
    <property type="taxonomic scope" value="Eukaryota"/>
</dbReference>
<dbReference type="HOGENOM" id="CLU_128423_0_0_1"/>
<dbReference type="InParanoid" id="Q42589"/>
<dbReference type="OMA" id="TVEFISC"/>
<dbReference type="PhylomeDB" id="Q42589"/>
<dbReference type="PRO" id="PR:Q42589"/>
<dbReference type="Proteomes" id="UP000006548">
    <property type="component" value="Chromosome 2"/>
</dbReference>
<dbReference type="ExpressionAtlas" id="Q42589">
    <property type="expression patterns" value="baseline and differential"/>
</dbReference>
<dbReference type="GO" id="GO:0048046">
    <property type="term" value="C:apoplast"/>
    <property type="evidence" value="ECO:0007005"/>
    <property type="project" value="TAIR"/>
</dbReference>
<dbReference type="GO" id="GO:0009534">
    <property type="term" value="C:chloroplast thylakoid"/>
    <property type="evidence" value="ECO:0007005"/>
    <property type="project" value="TAIR"/>
</dbReference>
<dbReference type="GO" id="GO:0005794">
    <property type="term" value="C:Golgi apparatus"/>
    <property type="evidence" value="ECO:0007005"/>
    <property type="project" value="TAIR"/>
</dbReference>
<dbReference type="GO" id="GO:0009505">
    <property type="term" value="C:plant-type cell wall"/>
    <property type="evidence" value="ECO:0000314"/>
    <property type="project" value="TAIR"/>
</dbReference>
<dbReference type="GO" id="GO:0005886">
    <property type="term" value="C:plasma membrane"/>
    <property type="evidence" value="ECO:0007005"/>
    <property type="project" value="TAIR"/>
</dbReference>
<dbReference type="GO" id="GO:0099503">
    <property type="term" value="C:secretory vesicle"/>
    <property type="evidence" value="ECO:0007005"/>
    <property type="project" value="TAIR"/>
</dbReference>
<dbReference type="GO" id="GO:0005516">
    <property type="term" value="F:calmodulin binding"/>
    <property type="evidence" value="ECO:0000314"/>
    <property type="project" value="TAIR"/>
</dbReference>
<dbReference type="GO" id="GO:0008289">
    <property type="term" value="F:lipid binding"/>
    <property type="evidence" value="ECO:0007669"/>
    <property type="project" value="UniProtKB-KW"/>
</dbReference>
<dbReference type="GO" id="GO:0071555">
    <property type="term" value="P:cell wall organization"/>
    <property type="evidence" value="ECO:0007669"/>
    <property type="project" value="UniProtKB-KW"/>
</dbReference>
<dbReference type="GO" id="GO:0006869">
    <property type="term" value="P:lipid transport"/>
    <property type="evidence" value="ECO:0000304"/>
    <property type="project" value="TAIR"/>
</dbReference>
<dbReference type="CDD" id="cd01960">
    <property type="entry name" value="nsLTP1"/>
    <property type="match status" value="1"/>
</dbReference>
<dbReference type="FunFam" id="1.10.110.10:FF:000002">
    <property type="entry name" value="Non-specific lipid-transfer protein"/>
    <property type="match status" value="1"/>
</dbReference>
<dbReference type="Gene3D" id="1.10.110.10">
    <property type="entry name" value="Plant lipid-transfer and hydrophobic proteins"/>
    <property type="match status" value="1"/>
</dbReference>
<dbReference type="InterPro" id="IPR036312">
    <property type="entry name" value="Bifun_inhib/LTP/seed_sf"/>
</dbReference>
<dbReference type="InterPro" id="IPR016140">
    <property type="entry name" value="Bifunc_inhib/LTP/seed_store"/>
</dbReference>
<dbReference type="InterPro" id="IPR000528">
    <property type="entry name" value="Plant_nsLTP"/>
</dbReference>
<dbReference type="PANTHER" id="PTHR33076">
    <property type="entry name" value="NON-SPECIFIC LIPID-TRANSFER PROTEIN 2-RELATED"/>
    <property type="match status" value="1"/>
</dbReference>
<dbReference type="Pfam" id="PF00234">
    <property type="entry name" value="Tryp_alpha_amyl"/>
    <property type="match status" value="1"/>
</dbReference>
<dbReference type="PRINTS" id="PR00382">
    <property type="entry name" value="LIPIDTRNSFER"/>
</dbReference>
<dbReference type="SMART" id="SM00499">
    <property type="entry name" value="AAI"/>
    <property type="match status" value="1"/>
</dbReference>
<dbReference type="SUPFAM" id="SSF47699">
    <property type="entry name" value="Bifunctional inhibitor/lipid-transfer protein/seed storage 2S albumin"/>
    <property type="match status" value="1"/>
</dbReference>
<dbReference type="PROSITE" id="PS00597">
    <property type="entry name" value="PLANT_LTP"/>
    <property type="match status" value="1"/>
</dbReference>
<accession>Q42589</accession>
<comment type="function">
    <text>Plant non-specific lipid-transfer proteins transfer phospholipids as well as galactolipids across membranes. May play a role in wax or cutin deposition in the cell walls of expanding epidermal cells and certain secretory tissues.</text>
</comment>
<comment type="subcellular location">
    <subcellularLocation>
        <location evidence="2">Secreted</location>
        <location evidence="2">Cell wall</location>
    </subcellularLocation>
</comment>
<comment type="tissue specificity">
    <text>Expressed primarily in epidermal cells.</text>
</comment>
<comment type="similarity">
    <text evidence="3">Belongs to the plant LTP family.</text>
</comment>
<gene>
    <name type="primary">LTP1</name>
    <name type="ordered locus">At2g38540</name>
    <name type="ORF">T6A23.26</name>
</gene>
<organism>
    <name type="scientific">Arabidopsis thaliana</name>
    <name type="common">Mouse-ear cress</name>
    <dbReference type="NCBI Taxonomy" id="3702"/>
    <lineage>
        <taxon>Eukaryota</taxon>
        <taxon>Viridiplantae</taxon>
        <taxon>Streptophyta</taxon>
        <taxon>Embryophyta</taxon>
        <taxon>Tracheophyta</taxon>
        <taxon>Spermatophyta</taxon>
        <taxon>Magnoliopsida</taxon>
        <taxon>eudicotyledons</taxon>
        <taxon>Gunneridae</taxon>
        <taxon>Pentapetalae</taxon>
        <taxon>rosids</taxon>
        <taxon>malvids</taxon>
        <taxon>Brassicales</taxon>
        <taxon>Brassicaceae</taxon>
        <taxon>Camelineae</taxon>
        <taxon>Arabidopsis</taxon>
    </lineage>
</organism>
<name>NLTP1_ARATH</name>
<sequence length="118" mass="11755">MAGVMKLACLLLACMIVAGPITSNAALSCGSVNSNLAACIGYVLQGGVIPPACCSGVKNLNSIAKTTPDRQQACNCIQGAARALGSGLNAGRAAGIPKACGVNIPYKISTSTNCKTVR</sequence>
<keyword id="KW-0134">Cell wall</keyword>
<keyword id="KW-0961">Cell wall biogenesis/degradation</keyword>
<keyword id="KW-1015">Disulfide bond</keyword>
<keyword id="KW-0446">Lipid-binding</keyword>
<keyword id="KW-1185">Reference proteome</keyword>
<keyword id="KW-0964">Secreted</keyword>
<keyword id="KW-0732">Signal</keyword>
<keyword id="KW-0813">Transport</keyword>